<comment type="function">
    <text>Inhibits trypsin.</text>
</comment>
<comment type="subcellular location">
    <subcellularLocation>
        <location>Secreted</location>
    </subcellularLocation>
</comment>
<comment type="domain">
    <text evidence="1">The presence of a 'disulfide through disulfide knot' structurally defines this protein as a knottin.</text>
</comment>
<comment type="similarity">
    <text evidence="2">Belongs to the protease inhibitor I7 (squash-type serine protease inhibitor) family.</text>
</comment>
<name>ITR4_CUCMA</name>
<accession>P07853</accession>
<keyword id="KW-0903">Direct protein sequencing</keyword>
<keyword id="KW-1015">Disulfide bond</keyword>
<keyword id="KW-0960">Knottin</keyword>
<keyword id="KW-0646">Protease inhibitor</keyword>
<keyword id="KW-1185">Reference proteome</keyword>
<keyword id="KW-0964">Secreted</keyword>
<keyword id="KW-0722">Serine protease inhibitor</keyword>
<reference key="1">
    <citation type="journal article" date="1985" name="Biochem. Biophys. Res. Commun.">
        <title>The squash family of serine proteinase inhibitors. Amino acid sequences and association equilibrium constants of inhibitors from squash, summer squash, zucchini, and cucumber seeds.</title>
        <authorList>
            <person name="Wieczorek M."/>
            <person name="Otlewski J."/>
            <person name="Cook J."/>
            <person name="Parks K."/>
            <person name="Leluk J."/>
            <person name="Wilimowska-Pelc A."/>
            <person name="Polanowski A."/>
            <person name="Wilusz T."/>
            <person name="Laskowski M. Jr."/>
        </authorList>
    </citation>
    <scope>PROTEIN SEQUENCE (CMT-IV)</scope>
    <source>
        <tissue>Seed</tissue>
    </source>
</reference>
<reference key="2">
    <citation type="journal article" date="1983" name="Hoppe-Seyler's Z. Physiol. Chem.">
        <title>Amino-acid sequence of two trypsin isoinhibitors, ITD I and ITD III from squash seeds (Cucurbita maxima).</title>
        <authorList>
            <person name="Wilusz T."/>
            <person name="Wieczorek M."/>
            <person name="Polanowski A."/>
            <person name="Denton A."/>
            <person name="Cook J."/>
            <person name="Laskowski M. Jr."/>
        </authorList>
    </citation>
    <scope>PROTEIN SEQUENCE (CMT-III)</scope>
    <source>
        <tissue>Seed</tissue>
    </source>
</reference>
<reference key="3">
    <citation type="journal article" date="1981" name="Hoppe-Seyler's Z. Physiol. Chem.">
        <title>Trypsin inhibitor III from squash seeds (Cucurbita maxima), its reactive site and proposed amino acid sequence.</title>
        <authorList>
            <person name="Nowak K."/>
            <person name="Slominska A."/>
            <person name="Polanowski A."/>
            <person name="Wieczorek M."/>
            <person name="Wilusz T."/>
        </authorList>
    </citation>
    <scope>PRELIMINARY PROTEIN SEQUENCE (CMT-III)</scope>
    <source>
        <tissue>Seed</tissue>
    </source>
</reference>
<reference key="4">
    <citation type="journal article" date="1992" name="Biochemistry">
        <title>Two-dimensional NMR studies of squash family inhibitors. Sequence-specific proton assignments and secondary structure of reactive-site hydrolyzed Cucurbita maxima trypsin inhibitor III.</title>
        <authorList>
            <person name="Krishnamoorthi R."/>
            <person name="Gong Y."/>
            <person name="Lin C.-L.S."/>
            <person name="Vandervelde D."/>
        </authorList>
    </citation>
    <scope>STRUCTURE BY NMR OF CMT-III</scope>
</reference>
<dbReference type="PIR" id="B01313">
    <property type="entry name" value="TIPU3"/>
</dbReference>
<dbReference type="PIR" id="S07156">
    <property type="entry name" value="S07156"/>
</dbReference>
<dbReference type="BMRB" id="P07853"/>
<dbReference type="SMR" id="P07853"/>
<dbReference type="MEROPS" id="I07.007"/>
<dbReference type="Proteomes" id="UP000504608">
    <property type="component" value="Unplaced"/>
</dbReference>
<dbReference type="GO" id="GO:0005576">
    <property type="term" value="C:extracellular region"/>
    <property type="evidence" value="ECO:0007669"/>
    <property type="project" value="UniProtKB-SubCell"/>
</dbReference>
<dbReference type="GO" id="GO:0004867">
    <property type="term" value="F:serine-type endopeptidase inhibitor activity"/>
    <property type="evidence" value="ECO:0007669"/>
    <property type="project" value="UniProtKB-KW"/>
</dbReference>
<dbReference type="CDD" id="cd00150">
    <property type="entry name" value="PlantTI"/>
    <property type="match status" value="1"/>
</dbReference>
<dbReference type="Gene3D" id="4.10.75.20">
    <property type="match status" value="1"/>
</dbReference>
<dbReference type="InterPro" id="IPR000737">
    <property type="entry name" value="Prot_inh_squash"/>
</dbReference>
<dbReference type="InterPro" id="IPR011052">
    <property type="entry name" value="Proteinase_amylase_inhib_sf"/>
</dbReference>
<dbReference type="Pfam" id="PF00299">
    <property type="entry name" value="Squash"/>
    <property type="match status" value="1"/>
</dbReference>
<dbReference type="PRINTS" id="PR00293">
    <property type="entry name" value="SQUASHINHBTR"/>
</dbReference>
<dbReference type="SMART" id="SM00286">
    <property type="entry name" value="PTI"/>
    <property type="match status" value="1"/>
</dbReference>
<dbReference type="SUPFAM" id="SSF57027">
    <property type="entry name" value="Plant inhibitors of proteinases and amylases"/>
    <property type="match status" value="1"/>
</dbReference>
<dbReference type="PROSITE" id="PS00286">
    <property type="entry name" value="SQUASH_INHIBITOR"/>
    <property type="match status" value="1"/>
</dbReference>
<evidence type="ECO:0000250" key="1"/>
<evidence type="ECO:0000305" key="2"/>
<protein>
    <recommendedName>
        <fullName>Trypsin inhibitor 4</fullName>
    </recommendedName>
    <alternativeName>
        <fullName>CMTI-IV</fullName>
    </alternativeName>
    <alternativeName>
        <fullName>Trypsin inhibitor IV</fullName>
    </alternativeName>
    <component>
        <recommendedName>
            <fullName>Trypsin inhibitor 3</fullName>
        </recommendedName>
        <alternativeName>
            <fullName>CMTI-III</fullName>
        </alternativeName>
        <alternativeName>
            <fullName>ITD-III</fullName>
        </alternativeName>
        <alternativeName>
            <fullName>Trypsin inhibitor III</fullName>
        </alternativeName>
    </component>
</protein>
<sequence>HEERVCPRILMKCKKDSDCLAECVCLEHGYCG</sequence>
<feature type="peptide" id="PRO_0000033197" description="Trypsin inhibitor 4">
    <location>
        <begin position="1"/>
        <end position="32"/>
    </location>
</feature>
<feature type="peptide" id="PRO_0000033198" description="Trypsin inhibitor 3">
    <location>
        <begin position="4"/>
        <end position="32"/>
    </location>
</feature>
<feature type="site" description="Reactive bond">
    <location>
        <begin position="8"/>
        <end position="9"/>
    </location>
</feature>
<feature type="disulfide bond" evidence="1">
    <location>
        <begin position="6"/>
        <end position="23"/>
    </location>
</feature>
<feature type="disulfide bond" evidence="1">
    <location>
        <begin position="13"/>
        <end position="25"/>
    </location>
</feature>
<feature type="disulfide bond" evidence="1">
    <location>
        <begin position="19"/>
        <end position="31"/>
    </location>
</feature>
<proteinExistence type="evidence at protein level"/>
<organism>
    <name type="scientific">Cucurbita maxima</name>
    <name type="common">Pumpkin</name>
    <name type="synonym">Winter squash</name>
    <dbReference type="NCBI Taxonomy" id="3661"/>
    <lineage>
        <taxon>Eukaryota</taxon>
        <taxon>Viridiplantae</taxon>
        <taxon>Streptophyta</taxon>
        <taxon>Embryophyta</taxon>
        <taxon>Tracheophyta</taxon>
        <taxon>Spermatophyta</taxon>
        <taxon>Magnoliopsida</taxon>
        <taxon>eudicotyledons</taxon>
        <taxon>Gunneridae</taxon>
        <taxon>Pentapetalae</taxon>
        <taxon>rosids</taxon>
        <taxon>fabids</taxon>
        <taxon>Cucurbitales</taxon>
        <taxon>Cucurbitaceae</taxon>
        <taxon>Cucurbiteae</taxon>
        <taxon>Cucurbita</taxon>
    </lineage>
</organism>